<evidence type="ECO:0000255" key="1">
    <source>
        <dbReference type="PROSITE-ProRule" id="PRU00326"/>
    </source>
</evidence>
<evidence type="ECO:0000256" key="2">
    <source>
        <dbReference type="SAM" id="MobiDB-lite"/>
    </source>
</evidence>
<evidence type="ECO:0000305" key="3"/>
<reference key="1">
    <citation type="journal article" date="2002" name="Nature">
        <title>The genome sequence and structure of rice chromosome 1.</title>
        <authorList>
            <person name="Sasaki T."/>
            <person name="Matsumoto T."/>
            <person name="Yamamoto K."/>
            <person name="Sakata K."/>
            <person name="Baba T."/>
            <person name="Katayose Y."/>
            <person name="Wu J."/>
            <person name="Niimura Y."/>
            <person name="Cheng Z."/>
            <person name="Nagamura Y."/>
            <person name="Antonio B.A."/>
            <person name="Kanamori H."/>
            <person name="Hosokawa S."/>
            <person name="Masukawa M."/>
            <person name="Arikawa K."/>
            <person name="Chiden Y."/>
            <person name="Hayashi M."/>
            <person name="Okamoto M."/>
            <person name="Ando T."/>
            <person name="Aoki H."/>
            <person name="Arita K."/>
            <person name="Hamada M."/>
            <person name="Harada C."/>
            <person name="Hijishita S."/>
            <person name="Honda M."/>
            <person name="Ichikawa Y."/>
            <person name="Idonuma A."/>
            <person name="Iijima M."/>
            <person name="Ikeda M."/>
            <person name="Ikeno M."/>
            <person name="Ito S."/>
            <person name="Ito T."/>
            <person name="Ito Y."/>
            <person name="Ito Y."/>
            <person name="Iwabuchi A."/>
            <person name="Kamiya K."/>
            <person name="Karasawa W."/>
            <person name="Katagiri S."/>
            <person name="Kikuta A."/>
            <person name="Kobayashi N."/>
            <person name="Kono I."/>
            <person name="Machita K."/>
            <person name="Maehara T."/>
            <person name="Mizuno H."/>
            <person name="Mizubayashi T."/>
            <person name="Mukai Y."/>
            <person name="Nagasaki H."/>
            <person name="Nakashima M."/>
            <person name="Nakama Y."/>
            <person name="Nakamichi Y."/>
            <person name="Nakamura M."/>
            <person name="Namiki N."/>
            <person name="Negishi M."/>
            <person name="Ohta I."/>
            <person name="Ono N."/>
            <person name="Saji S."/>
            <person name="Sakai K."/>
            <person name="Shibata M."/>
            <person name="Shimokawa T."/>
            <person name="Shomura A."/>
            <person name="Song J."/>
            <person name="Takazaki Y."/>
            <person name="Terasawa K."/>
            <person name="Tsuji K."/>
            <person name="Waki K."/>
            <person name="Yamagata H."/>
            <person name="Yamane H."/>
            <person name="Yoshiki S."/>
            <person name="Yoshihara R."/>
            <person name="Yukawa K."/>
            <person name="Zhong H."/>
            <person name="Iwama H."/>
            <person name="Endo T."/>
            <person name="Ito H."/>
            <person name="Hahn J.H."/>
            <person name="Kim H.-I."/>
            <person name="Eun M.-Y."/>
            <person name="Yano M."/>
            <person name="Jiang J."/>
            <person name="Gojobori T."/>
        </authorList>
    </citation>
    <scope>NUCLEOTIDE SEQUENCE [LARGE SCALE GENOMIC DNA]</scope>
    <source>
        <strain>cv. Nipponbare</strain>
    </source>
</reference>
<reference key="2">
    <citation type="journal article" date="2005" name="Nature">
        <title>The map-based sequence of the rice genome.</title>
        <authorList>
            <consortium name="International rice genome sequencing project (IRGSP)"/>
        </authorList>
    </citation>
    <scope>NUCLEOTIDE SEQUENCE [LARGE SCALE GENOMIC DNA]</scope>
    <source>
        <strain>cv. Nipponbare</strain>
    </source>
</reference>
<reference key="3">
    <citation type="journal article" date="2008" name="Nucleic Acids Res.">
        <title>The rice annotation project database (RAP-DB): 2008 update.</title>
        <authorList>
            <consortium name="The rice annotation project (RAP)"/>
        </authorList>
    </citation>
    <scope>GENOME REANNOTATION</scope>
    <source>
        <strain>cv. Nipponbare</strain>
    </source>
</reference>
<reference key="4">
    <citation type="journal article" date="2013" name="Rice">
        <title>Improvement of the Oryza sativa Nipponbare reference genome using next generation sequence and optical map data.</title>
        <authorList>
            <person name="Kawahara Y."/>
            <person name="de la Bastide M."/>
            <person name="Hamilton J.P."/>
            <person name="Kanamori H."/>
            <person name="McCombie W.R."/>
            <person name="Ouyang S."/>
            <person name="Schwartz D.C."/>
            <person name="Tanaka T."/>
            <person name="Wu J."/>
            <person name="Zhou S."/>
            <person name="Childs K.L."/>
            <person name="Davidson R.M."/>
            <person name="Lin H."/>
            <person name="Quesada-Ocampo L."/>
            <person name="Vaillancourt B."/>
            <person name="Sakai H."/>
            <person name="Lee S.S."/>
            <person name="Kim J."/>
            <person name="Numa H."/>
            <person name="Itoh T."/>
            <person name="Buell C.R."/>
            <person name="Matsumoto T."/>
        </authorList>
    </citation>
    <scope>GENOME REANNOTATION</scope>
    <source>
        <strain>cv. Nipponbare</strain>
    </source>
</reference>
<reference key="5">
    <citation type="submission" date="2006-10" db="EMBL/GenBank/DDBJ databases">
        <title>Oryza sativa full length cDNA.</title>
        <authorList>
            <consortium name="The rice full-length cDNA consortium"/>
        </authorList>
    </citation>
    <scope>NUCLEOTIDE SEQUENCE [LARGE SCALE MRNA]</scope>
    <source>
        <strain>cv. Nipponbare</strain>
    </source>
</reference>
<dbReference type="EMBL" id="AP003229">
    <property type="protein sequence ID" value="BAD87058.1"/>
    <property type="molecule type" value="Genomic_DNA"/>
</dbReference>
<dbReference type="EMBL" id="AP008207">
    <property type="protein sequence ID" value="BAF06023.2"/>
    <property type="status" value="ALT_SEQ"/>
    <property type="molecule type" value="Genomic_DNA"/>
</dbReference>
<dbReference type="EMBL" id="AP014957">
    <property type="protein sequence ID" value="BAS74112.1"/>
    <property type="molecule type" value="Genomic_DNA"/>
</dbReference>
<dbReference type="EMBL" id="AK243092">
    <property type="status" value="NOT_ANNOTATED_CDS"/>
    <property type="molecule type" value="mRNA"/>
</dbReference>
<dbReference type="SMR" id="Q5JNA1"/>
<dbReference type="FunCoup" id="Q5JNA1">
    <property type="interactions" value="790"/>
</dbReference>
<dbReference type="STRING" id="39947.Q5JNA1"/>
<dbReference type="PaxDb" id="39947-Q5JNA1"/>
<dbReference type="EnsemblPlants" id="Os01t0723700-01">
    <property type="protein sequence ID" value="Os01t0723700-01"/>
    <property type="gene ID" value="Os01g0723700"/>
</dbReference>
<dbReference type="Gramene" id="Os01t0723700-01">
    <property type="protein sequence ID" value="Os01t0723700-01"/>
    <property type="gene ID" value="Os01g0723700"/>
</dbReference>
<dbReference type="KEGG" id="dosa:Os01g0723700"/>
<dbReference type="KEGG" id="osa:4324719"/>
<dbReference type="eggNOG" id="ENOG502SYBV">
    <property type="taxonomic scope" value="Eukaryota"/>
</dbReference>
<dbReference type="HOGENOM" id="CLU_354257_0_0_1"/>
<dbReference type="InParanoid" id="Q5JNA1"/>
<dbReference type="OMA" id="HANNTCN"/>
<dbReference type="OrthoDB" id="1666376at2759"/>
<dbReference type="Proteomes" id="UP000000763">
    <property type="component" value="Chromosome 1"/>
</dbReference>
<dbReference type="Proteomes" id="UP000059680">
    <property type="component" value="Chromosome 1"/>
</dbReference>
<dbReference type="GO" id="GO:0005634">
    <property type="term" value="C:nucleus"/>
    <property type="evidence" value="ECO:0007669"/>
    <property type="project" value="UniProtKB-SubCell"/>
</dbReference>
<dbReference type="GO" id="GO:0003677">
    <property type="term" value="F:DNA binding"/>
    <property type="evidence" value="ECO:0007669"/>
    <property type="project" value="UniProtKB-KW"/>
</dbReference>
<dbReference type="CDD" id="cd10017">
    <property type="entry name" value="B3_DNA"/>
    <property type="match status" value="1"/>
</dbReference>
<dbReference type="Gene3D" id="2.40.330.10">
    <property type="entry name" value="DNA-binding pseudobarrel domain"/>
    <property type="match status" value="1"/>
</dbReference>
<dbReference type="InterPro" id="IPR003340">
    <property type="entry name" value="B3_DNA-bd"/>
</dbReference>
<dbReference type="InterPro" id="IPR015300">
    <property type="entry name" value="DNA-bd_pseudobarrel_sf"/>
</dbReference>
<dbReference type="InterPro" id="IPR050655">
    <property type="entry name" value="Plant_B3_domain"/>
</dbReference>
<dbReference type="PANTHER" id="PTHR31920">
    <property type="entry name" value="B3 DOMAIN-CONTAINING"/>
    <property type="match status" value="1"/>
</dbReference>
<dbReference type="PANTHER" id="PTHR31920:SF122">
    <property type="entry name" value="B3 DOMAIN-CONTAINING PROTEIN REM23"/>
    <property type="match status" value="1"/>
</dbReference>
<dbReference type="Pfam" id="PF02362">
    <property type="entry name" value="B3"/>
    <property type="match status" value="1"/>
</dbReference>
<dbReference type="SMART" id="SM01019">
    <property type="entry name" value="B3"/>
    <property type="match status" value="1"/>
</dbReference>
<dbReference type="SUPFAM" id="SSF101936">
    <property type="entry name" value="DNA-binding pseudobarrel domain"/>
    <property type="match status" value="1"/>
</dbReference>
<dbReference type="PROSITE" id="PS50863">
    <property type="entry name" value="B3"/>
    <property type="match status" value="1"/>
</dbReference>
<feature type="chain" id="PRO_0000378043" description="B3 domain-containing protein Os03g0120900">
    <location>
        <begin position="1"/>
        <end position="719"/>
    </location>
</feature>
<feature type="DNA-binding region" description="TF-B3" evidence="1">
    <location>
        <begin position="7"/>
        <end position="110"/>
    </location>
</feature>
<feature type="region of interest" description="Disordered" evidence="2">
    <location>
        <begin position="328"/>
        <end position="381"/>
    </location>
</feature>
<feature type="region of interest" description="Disordered" evidence="2">
    <location>
        <begin position="412"/>
        <end position="443"/>
    </location>
</feature>
<feature type="compositionally biased region" description="Basic and acidic residues" evidence="2">
    <location>
        <begin position="351"/>
        <end position="366"/>
    </location>
</feature>
<feature type="compositionally biased region" description="Polar residues" evidence="2">
    <location>
        <begin position="416"/>
        <end position="430"/>
    </location>
</feature>
<protein>
    <recommendedName>
        <fullName>B3 domain-containing protein Os03g0120900</fullName>
    </recommendedName>
</protein>
<sequence length="719" mass="82661">MEEVRRHHHFIKVMVGEFARRLEIPQGFLIHIPEVDHSTFDASLPSSAKGTLQNSEGKTWPVELEKLDGHVFLTTGWAKFVEDNSLREYEFLLFRYDDNMHFMVLPFGLNACEKVIRSSGSPQGKLPCDIFCCTKRGRDGDRLTEAANSLTPSHSQVLQRTTQGHELISPQSFPDQHEVCGSKDGLDEHLSLNGPMEDDKANAIAEVMSILDVDKVTVELFCAMLVFYKWNVDAVAEDFDICRGKPQIQNLFLKHKLHFQFDIVKRKLRKFFPPDDYYSSPILESRKCSLEEPKLSNQPLQCDLTTEKCRLVDEHDLCNFSQKKRRKRGSFCSPETPRRSPRLARQNNSHDSAENTLKERSEERQPSPDSMIDQAESRSEQACLCHDKTDSGSLFQDSKKVKPAHGEVDLCEEPQHNQGENEGNLDQVNNKETDEEQIERNAVETSESFTRRGCIKSSPASCEVPACLRINELSLTWKPAEHVNPLEKVLLDIQRDNFMKTISHVQGIIRNHPSDLLTADVITVVVQKEIFKWNCCLKDRDAQRIVNALLEHARKIKEMHNFNSEMRKEEFSAKLKVHLKWQLKEVETIYTSLELDYKKATSDDNIAFSMLHDKKKKLHNLQDEITGLQQSLEMKKDEMQKLAHQVAEHESVFQKSLMERLRIKEVMKGYEQTLAEVKVQLTSTEVGSIDIEALVKVEMDNMTKEIELSKESLLNITFH</sequence>
<name>Y1237_ORYSJ</name>
<gene>
    <name type="ordered locus">Os01g0723700</name>
    <name type="ordered locus">LOC_Os01g52540</name>
    <name type="ORF">P0022F10.18</name>
</gene>
<accession>Q5JNA1</accession>
<accession>A0A0P0V7M2</accession>
<keyword id="KW-0238">DNA-binding</keyword>
<keyword id="KW-0539">Nucleus</keyword>
<keyword id="KW-1185">Reference proteome</keyword>
<keyword id="KW-0804">Transcription</keyword>
<keyword id="KW-0805">Transcription regulation</keyword>
<proteinExistence type="evidence at transcript level"/>
<organism>
    <name type="scientific">Oryza sativa subsp. japonica</name>
    <name type="common">Rice</name>
    <dbReference type="NCBI Taxonomy" id="39947"/>
    <lineage>
        <taxon>Eukaryota</taxon>
        <taxon>Viridiplantae</taxon>
        <taxon>Streptophyta</taxon>
        <taxon>Embryophyta</taxon>
        <taxon>Tracheophyta</taxon>
        <taxon>Spermatophyta</taxon>
        <taxon>Magnoliopsida</taxon>
        <taxon>Liliopsida</taxon>
        <taxon>Poales</taxon>
        <taxon>Poaceae</taxon>
        <taxon>BOP clade</taxon>
        <taxon>Oryzoideae</taxon>
        <taxon>Oryzeae</taxon>
        <taxon>Oryzinae</taxon>
        <taxon>Oryza</taxon>
        <taxon>Oryza sativa</taxon>
    </lineage>
</organism>
<comment type="subcellular location">
    <subcellularLocation>
        <location evidence="1">Nucleus</location>
    </subcellularLocation>
</comment>
<comment type="sequence caution" evidence="3">
    <conflict type="erroneous gene model prediction">
        <sequence resource="EMBL-CDS" id="BAF06023"/>
    </conflict>
</comment>